<protein>
    <recommendedName>
        <fullName evidence="1">Agmatinase</fullName>
        <ecNumber evidence="1">3.5.3.11</ecNumber>
    </recommendedName>
    <alternativeName>
        <fullName evidence="1">Agmatine ureohydrolase</fullName>
        <shortName evidence="1">AUH</shortName>
    </alternativeName>
</protein>
<dbReference type="EC" id="3.5.3.11" evidence="1"/>
<dbReference type="EMBL" id="AE005674">
    <property type="protein sequence ID" value="AAN44408.1"/>
    <property type="molecule type" value="Genomic_DNA"/>
</dbReference>
<dbReference type="EMBL" id="AE014073">
    <property type="protein sequence ID" value="AAP18231.1"/>
    <property type="molecule type" value="Genomic_DNA"/>
</dbReference>
<dbReference type="RefSeq" id="NP_708701.1">
    <property type="nucleotide sequence ID" value="NC_004337.2"/>
</dbReference>
<dbReference type="RefSeq" id="WP_000105566.1">
    <property type="nucleotide sequence ID" value="NZ_WPGW01000187.1"/>
</dbReference>
<dbReference type="SMR" id="P60657"/>
<dbReference type="STRING" id="198214.SF2927"/>
<dbReference type="PaxDb" id="198214-SF2927"/>
<dbReference type="GeneID" id="1025911"/>
<dbReference type="GeneID" id="89517749"/>
<dbReference type="KEGG" id="sfl:SF2927"/>
<dbReference type="KEGG" id="sfx:S3129"/>
<dbReference type="PATRIC" id="fig|198214.7.peg.3483"/>
<dbReference type="HOGENOM" id="CLU_039478_0_0_6"/>
<dbReference type="UniPathway" id="UPA00534">
    <property type="reaction ID" value="UER00287"/>
</dbReference>
<dbReference type="Proteomes" id="UP000001006">
    <property type="component" value="Chromosome"/>
</dbReference>
<dbReference type="Proteomes" id="UP000002673">
    <property type="component" value="Chromosome"/>
</dbReference>
<dbReference type="GO" id="GO:0008783">
    <property type="term" value="F:agmatinase activity"/>
    <property type="evidence" value="ECO:0007669"/>
    <property type="project" value="UniProtKB-UniRule"/>
</dbReference>
<dbReference type="GO" id="GO:0030145">
    <property type="term" value="F:manganese ion binding"/>
    <property type="evidence" value="ECO:0007669"/>
    <property type="project" value="InterPro"/>
</dbReference>
<dbReference type="GO" id="GO:0033389">
    <property type="term" value="P:putrescine biosynthetic process from arginine, via agmatine"/>
    <property type="evidence" value="ECO:0007669"/>
    <property type="project" value="TreeGrafter"/>
</dbReference>
<dbReference type="GO" id="GO:0008295">
    <property type="term" value="P:spermidine biosynthetic process"/>
    <property type="evidence" value="ECO:0007669"/>
    <property type="project" value="UniProtKB-UniRule"/>
</dbReference>
<dbReference type="CDD" id="cd11592">
    <property type="entry name" value="Agmatinase_PAH"/>
    <property type="match status" value="1"/>
</dbReference>
<dbReference type="FunFam" id="3.40.800.10:FF:000001">
    <property type="entry name" value="Agmatinase"/>
    <property type="match status" value="1"/>
</dbReference>
<dbReference type="Gene3D" id="3.40.800.10">
    <property type="entry name" value="Ureohydrolase domain"/>
    <property type="match status" value="1"/>
</dbReference>
<dbReference type="HAMAP" id="MF_01418">
    <property type="entry name" value="SpeB"/>
    <property type="match status" value="1"/>
</dbReference>
<dbReference type="InterPro" id="IPR023694">
    <property type="entry name" value="Agmatinase"/>
</dbReference>
<dbReference type="InterPro" id="IPR005925">
    <property type="entry name" value="Agmatinase-rel"/>
</dbReference>
<dbReference type="InterPro" id="IPR006035">
    <property type="entry name" value="Ureohydrolase"/>
</dbReference>
<dbReference type="InterPro" id="IPR023696">
    <property type="entry name" value="Ureohydrolase_dom_sf"/>
</dbReference>
<dbReference type="InterPro" id="IPR020855">
    <property type="entry name" value="Ureohydrolase_Mn_BS"/>
</dbReference>
<dbReference type="NCBIfam" id="TIGR01230">
    <property type="entry name" value="agmatinase"/>
    <property type="match status" value="1"/>
</dbReference>
<dbReference type="NCBIfam" id="NF002564">
    <property type="entry name" value="PRK02190.1"/>
    <property type="match status" value="1"/>
</dbReference>
<dbReference type="PANTHER" id="PTHR11358">
    <property type="entry name" value="ARGINASE/AGMATINASE"/>
    <property type="match status" value="1"/>
</dbReference>
<dbReference type="PANTHER" id="PTHR11358:SF26">
    <property type="entry name" value="GUANIDINO ACID HYDROLASE, MITOCHONDRIAL"/>
    <property type="match status" value="1"/>
</dbReference>
<dbReference type="Pfam" id="PF00491">
    <property type="entry name" value="Arginase"/>
    <property type="match status" value="1"/>
</dbReference>
<dbReference type="PIRSF" id="PIRSF036979">
    <property type="entry name" value="Arginase"/>
    <property type="match status" value="1"/>
</dbReference>
<dbReference type="SUPFAM" id="SSF52768">
    <property type="entry name" value="Arginase/deacetylase"/>
    <property type="match status" value="1"/>
</dbReference>
<dbReference type="PROSITE" id="PS01053">
    <property type="entry name" value="ARGINASE_1"/>
    <property type="match status" value="1"/>
</dbReference>
<dbReference type="PROSITE" id="PS51409">
    <property type="entry name" value="ARGINASE_2"/>
    <property type="match status" value="1"/>
</dbReference>
<feature type="chain" id="PRO_0000173743" description="Agmatinase">
    <location>
        <begin position="1"/>
        <end position="306"/>
    </location>
</feature>
<feature type="binding site" evidence="1">
    <location>
        <position position="126"/>
    </location>
    <ligand>
        <name>Mn(2+)</name>
        <dbReference type="ChEBI" id="CHEBI:29035"/>
    </ligand>
</feature>
<feature type="binding site" evidence="1">
    <location>
        <position position="149"/>
    </location>
    <ligand>
        <name>Mn(2+)</name>
        <dbReference type="ChEBI" id="CHEBI:29035"/>
    </ligand>
</feature>
<feature type="binding site" evidence="1">
    <location>
        <position position="151"/>
    </location>
    <ligand>
        <name>Mn(2+)</name>
        <dbReference type="ChEBI" id="CHEBI:29035"/>
    </ligand>
</feature>
<feature type="binding site" evidence="1">
    <location>
        <position position="153"/>
    </location>
    <ligand>
        <name>Mn(2+)</name>
        <dbReference type="ChEBI" id="CHEBI:29035"/>
    </ligand>
</feature>
<feature type="binding site" evidence="1">
    <location>
        <position position="230"/>
    </location>
    <ligand>
        <name>Mn(2+)</name>
        <dbReference type="ChEBI" id="CHEBI:29035"/>
    </ligand>
</feature>
<feature type="binding site" evidence="1">
    <location>
        <position position="232"/>
    </location>
    <ligand>
        <name>Mn(2+)</name>
        <dbReference type="ChEBI" id="CHEBI:29035"/>
    </ligand>
</feature>
<evidence type="ECO:0000255" key="1">
    <source>
        <dbReference type="HAMAP-Rule" id="MF_01418"/>
    </source>
</evidence>
<proteinExistence type="inferred from homology"/>
<name>SPEB_SHIFL</name>
<gene>
    <name evidence="1" type="primary">speB</name>
    <name type="ordered locus">SF2927</name>
    <name type="ordered locus">S3129</name>
</gene>
<accession>P60657</accession>
<accession>P16936</accession>
<organism>
    <name type="scientific">Shigella flexneri</name>
    <dbReference type="NCBI Taxonomy" id="623"/>
    <lineage>
        <taxon>Bacteria</taxon>
        <taxon>Pseudomonadati</taxon>
        <taxon>Pseudomonadota</taxon>
        <taxon>Gammaproteobacteria</taxon>
        <taxon>Enterobacterales</taxon>
        <taxon>Enterobacteriaceae</taxon>
        <taxon>Shigella</taxon>
    </lineage>
</organism>
<reference key="1">
    <citation type="journal article" date="2002" name="Nucleic Acids Res.">
        <title>Genome sequence of Shigella flexneri 2a: insights into pathogenicity through comparison with genomes of Escherichia coli K12 and O157.</title>
        <authorList>
            <person name="Jin Q."/>
            <person name="Yuan Z."/>
            <person name="Xu J."/>
            <person name="Wang Y."/>
            <person name="Shen Y."/>
            <person name="Lu W."/>
            <person name="Wang J."/>
            <person name="Liu H."/>
            <person name="Yang J."/>
            <person name="Yang F."/>
            <person name="Zhang X."/>
            <person name="Zhang J."/>
            <person name="Yang G."/>
            <person name="Wu H."/>
            <person name="Qu D."/>
            <person name="Dong J."/>
            <person name="Sun L."/>
            <person name="Xue Y."/>
            <person name="Zhao A."/>
            <person name="Gao Y."/>
            <person name="Zhu J."/>
            <person name="Kan B."/>
            <person name="Ding K."/>
            <person name="Chen S."/>
            <person name="Cheng H."/>
            <person name="Yao Z."/>
            <person name="He B."/>
            <person name="Chen R."/>
            <person name="Ma D."/>
            <person name="Qiang B."/>
            <person name="Wen Y."/>
            <person name="Hou Y."/>
            <person name="Yu J."/>
        </authorList>
    </citation>
    <scope>NUCLEOTIDE SEQUENCE [LARGE SCALE GENOMIC DNA]</scope>
    <source>
        <strain>301 / Serotype 2a</strain>
    </source>
</reference>
<reference key="2">
    <citation type="journal article" date="2003" name="Infect. Immun.">
        <title>Complete genome sequence and comparative genomics of Shigella flexneri serotype 2a strain 2457T.</title>
        <authorList>
            <person name="Wei J."/>
            <person name="Goldberg M.B."/>
            <person name="Burland V."/>
            <person name="Venkatesan M.M."/>
            <person name="Deng W."/>
            <person name="Fournier G."/>
            <person name="Mayhew G.F."/>
            <person name="Plunkett G. III"/>
            <person name="Rose D.J."/>
            <person name="Darling A."/>
            <person name="Mau B."/>
            <person name="Perna N.T."/>
            <person name="Payne S.M."/>
            <person name="Runyen-Janecky L.J."/>
            <person name="Zhou S."/>
            <person name="Schwartz D.C."/>
            <person name="Blattner F.R."/>
        </authorList>
    </citation>
    <scope>NUCLEOTIDE SEQUENCE [LARGE SCALE GENOMIC DNA]</scope>
    <source>
        <strain>ATCC 700930 / 2457T / Serotype 2a</strain>
    </source>
</reference>
<keyword id="KW-0378">Hydrolase</keyword>
<keyword id="KW-0464">Manganese</keyword>
<keyword id="KW-0479">Metal-binding</keyword>
<keyword id="KW-0620">Polyamine biosynthesis</keyword>
<keyword id="KW-0661">Putrescine biosynthesis</keyword>
<keyword id="KW-1185">Reference proteome</keyword>
<keyword id="KW-0745">Spermidine biosynthesis</keyword>
<sequence>MSTLGHQYDNSLVSNAFGFLRLPMNFQPYDSDADWVITGVPFDMATSGRAGGRHGPAAIRQVSTNLAWEHNRFPWNFDMRERLNVVDCGDLVYAFGDAREMSEKLQAHAEKLLAAGKRMLSFGGDHFVTLPLLRAHAKHFGKMALVHFDAHTDTYANGCEFDHGTMFYTAPKEGLIDPNHSVQIGIRTEFDKDNGFTVLDACQVNDRSVDDVIAQVKQIVGDMPVYLTFDIDCLDPAFAPGTGTPVIGGLTSDRAIKLVRGLKDLNIVGMDVVEVAPAYDQSEITALAAATLALEMLYIQAAKKGE</sequence>
<comment type="function">
    <text evidence="1">Catalyzes the formation of putrescine from agmatine.</text>
</comment>
<comment type="catalytic activity">
    <reaction evidence="1">
        <text>agmatine + H2O = urea + putrescine</text>
        <dbReference type="Rhea" id="RHEA:13929"/>
        <dbReference type="ChEBI" id="CHEBI:15377"/>
        <dbReference type="ChEBI" id="CHEBI:16199"/>
        <dbReference type="ChEBI" id="CHEBI:58145"/>
        <dbReference type="ChEBI" id="CHEBI:326268"/>
        <dbReference type="EC" id="3.5.3.11"/>
    </reaction>
</comment>
<comment type="cofactor">
    <cofactor evidence="1">
        <name>Mn(2+)</name>
        <dbReference type="ChEBI" id="CHEBI:29035"/>
    </cofactor>
</comment>
<comment type="pathway">
    <text evidence="1">Amine and polyamine biosynthesis; putrescine biosynthesis via agmatine pathway; putrescine from agmatine: step 1/1.</text>
</comment>
<comment type="similarity">
    <text evidence="1">Belongs to the arginase family. Agmatinase subfamily.</text>
</comment>